<evidence type="ECO:0000255" key="1">
    <source>
        <dbReference type="HAMAP-Rule" id="MF_00679"/>
    </source>
</evidence>
<sequence>MALLQISEPGLSAAPHQRRLAAGIDLGTTNSLVATVRSGQAETLADHEGRHLLPSVVHYQQQGHSVGYDARTNAALDTANTISSVKRLMGRSLADIQQRYPHLPYQFQASENGLPMIETAAGLLNPVRVSADILKALAARATEALAGELDGVVITVPAYFDDAQRQGTKDAARLAGLHVLRLLNEPTAAAIAYGLDSGQEGVIAVYDLGGGTFDISILRLSRGVFEVLATGGDSALGGDDFDHLLADYIREQAGIPDRSDNRVQRELLDAAIAAKIALSDADSVTVNVAGWQGEISREQFNELIAPLVKRTLLACRRALKDAGVEADEVLEVVMVGGSTRVPLVRERVGEFFGRPPLTSIDPDKVVAIGAAIQADILVGNKPDSEMLLLDVIPLSLGLETMGGLVEKVIPRNTTIPVARAQDFTTFKDGQTAMSIHVMQGERELVQDCRSLARFALRGIPALPAGGAHIRVTFQVDADGLLSVTAMEKSTGVEASIQVKPSYGLTDSEIASMIKDSMSYAEQDVKARMLAEQKVEAARVLESLHGALAADAALLSAAERQVIDDAAAHLSEVAQGDDVDAIEQAIKNVDKQTQDFAARRMDQSVRRALKGHSVDEV</sequence>
<accession>Q32D38</accession>
<comment type="function">
    <text evidence="1">Chaperone involved in the maturation of iron-sulfur cluster-containing proteins. Has a low intrinsic ATPase activity which is markedly stimulated by HscB. Involved in the maturation of IscU.</text>
</comment>
<comment type="similarity">
    <text evidence="1">Belongs to the heat shock protein 70 family.</text>
</comment>
<gene>
    <name evidence="1" type="primary">hscA</name>
    <name type="ordered locus">SDY_2722</name>
</gene>
<reference key="1">
    <citation type="journal article" date="2005" name="Nucleic Acids Res.">
        <title>Genome dynamics and diversity of Shigella species, the etiologic agents of bacillary dysentery.</title>
        <authorList>
            <person name="Yang F."/>
            <person name="Yang J."/>
            <person name="Zhang X."/>
            <person name="Chen L."/>
            <person name="Jiang Y."/>
            <person name="Yan Y."/>
            <person name="Tang X."/>
            <person name="Wang J."/>
            <person name="Xiong Z."/>
            <person name="Dong J."/>
            <person name="Xue Y."/>
            <person name="Zhu Y."/>
            <person name="Xu X."/>
            <person name="Sun L."/>
            <person name="Chen S."/>
            <person name="Nie H."/>
            <person name="Peng J."/>
            <person name="Xu J."/>
            <person name="Wang Y."/>
            <person name="Yuan Z."/>
            <person name="Wen Y."/>
            <person name="Yao Z."/>
            <person name="Shen Y."/>
            <person name="Qiang B."/>
            <person name="Hou Y."/>
            <person name="Yu J."/>
            <person name="Jin Q."/>
        </authorList>
    </citation>
    <scope>NUCLEOTIDE SEQUENCE [LARGE SCALE GENOMIC DNA]</scope>
    <source>
        <strain>Sd197</strain>
    </source>
</reference>
<protein>
    <recommendedName>
        <fullName evidence="1">Chaperone protein HscA</fullName>
    </recommendedName>
    <alternativeName>
        <fullName evidence="1">Hsc66</fullName>
    </alternativeName>
</protein>
<proteinExistence type="inferred from homology"/>
<dbReference type="EMBL" id="CP000034">
    <property type="protein sequence ID" value="ABB62767.1"/>
    <property type="molecule type" value="Genomic_DNA"/>
</dbReference>
<dbReference type="RefSeq" id="WP_001196613.1">
    <property type="nucleotide sequence ID" value="NC_007606.1"/>
</dbReference>
<dbReference type="RefSeq" id="YP_404258.1">
    <property type="nucleotide sequence ID" value="NC_007606.1"/>
</dbReference>
<dbReference type="SMR" id="Q32D38"/>
<dbReference type="STRING" id="300267.SDY_2722"/>
<dbReference type="EnsemblBacteria" id="ABB62767">
    <property type="protein sequence ID" value="ABB62767"/>
    <property type="gene ID" value="SDY_2722"/>
</dbReference>
<dbReference type="GeneID" id="93774610"/>
<dbReference type="KEGG" id="sdy:SDY_2722"/>
<dbReference type="PATRIC" id="fig|300267.13.peg.3283"/>
<dbReference type="HOGENOM" id="CLU_005965_2_1_6"/>
<dbReference type="Proteomes" id="UP000002716">
    <property type="component" value="Chromosome"/>
</dbReference>
<dbReference type="GO" id="GO:0005524">
    <property type="term" value="F:ATP binding"/>
    <property type="evidence" value="ECO:0007669"/>
    <property type="project" value="UniProtKB-KW"/>
</dbReference>
<dbReference type="GO" id="GO:0016887">
    <property type="term" value="F:ATP hydrolysis activity"/>
    <property type="evidence" value="ECO:0007669"/>
    <property type="project" value="UniProtKB-UniRule"/>
</dbReference>
<dbReference type="GO" id="GO:0140662">
    <property type="term" value="F:ATP-dependent protein folding chaperone"/>
    <property type="evidence" value="ECO:0007669"/>
    <property type="project" value="InterPro"/>
</dbReference>
<dbReference type="GO" id="GO:0051082">
    <property type="term" value="F:unfolded protein binding"/>
    <property type="evidence" value="ECO:0007669"/>
    <property type="project" value="InterPro"/>
</dbReference>
<dbReference type="GO" id="GO:0016226">
    <property type="term" value="P:iron-sulfur cluster assembly"/>
    <property type="evidence" value="ECO:0007669"/>
    <property type="project" value="InterPro"/>
</dbReference>
<dbReference type="CDD" id="cd10236">
    <property type="entry name" value="ASKHA_NBD_HSP70_HscA"/>
    <property type="match status" value="1"/>
</dbReference>
<dbReference type="FunFam" id="1.20.1270.10:FF:000006">
    <property type="entry name" value="Chaperone protein HscA"/>
    <property type="match status" value="1"/>
</dbReference>
<dbReference type="FunFam" id="3.30.420.40:FF:000046">
    <property type="entry name" value="Chaperone protein HscA"/>
    <property type="match status" value="1"/>
</dbReference>
<dbReference type="FunFam" id="3.90.640.10:FF:000013">
    <property type="entry name" value="Chaperone protein HscA"/>
    <property type="match status" value="1"/>
</dbReference>
<dbReference type="FunFam" id="2.60.34.10:FF:000005">
    <property type="entry name" value="Chaperone protein HscA homolog"/>
    <property type="match status" value="1"/>
</dbReference>
<dbReference type="FunFam" id="3.30.420.40:FF:000020">
    <property type="entry name" value="Chaperone protein HscA homolog"/>
    <property type="match status" value="1"/>
</dbReference>
<dbReference type="Gene3D" id="1.20.1270.10">
    <property type="match status" value="1"/>
</dbReference>
<dbReference type="Gene3D" id="3.30.420.40">
    <property type="match status" value="2"/>
</dbReference>
<dbReference type="Gene3D" id="3.90.640.10">
    <property type="entry name" value="Actin, Chain A, domain 4"/>
    <property type="match status" value="1"/>
</dbReference>
<dbReference type="Gene3D" id="2.60.34.10">
    <property type="entry name" value="Substrate Binding Domain Of DNAk, Chain A, domain 1"/>
    <property type="match status" value="1"/>
</dbReference>
<dbReference type="HAMAP" id="MF_00679">
    <property type="entry name" value="HscA"/>
    <property type="match status" value="1"/>
</dbReference>
<dbReference type="InterPro" id="IPR043129">
    <property type="entry name" value="ATPase_NBD"/>
</dbReference>
<dbReference type="InterPro" id="IPR018181">
    <property type="entry name" value="Heat_shock_70_CS"/>
</dbReference>
<dbReference type="InterPro" id="IPR042039">
    <property type="entry name" value="HscA_NBD"/>
</dbReference>
<dbReference type="InterPro" id="IPR029048">
    <property type="entry name" value="HSP70_C_sf"/>
</dbReference>
<dbReference type="InterPro" id="IPR029047">
    <property type="entry name" value="HSP70_peptide-bd_sf"/>
</dbReference>
<dbReference type="InterPro" id="IPR013126">
    <property type="entry name" value="Hsp_70_fam"/>
</dbReference>
<dbReference type="InterPro" id="IPR010236">
    <property type="entry name" value="ISC_FeS_clus_asmbl_HscA"/>
</dbReference>
<dbReference type="NCBIfam" id="TIGR01991">
    <property type="entry name" value="HscA"/>
    <property type="match status" value="1"/>
</dbReference>
<dbReference type="NCBIfam" id="NF003520">
    <property type="entry name" value="PRK05183.1"/>
    <property type="match status" value="1"/>
</dbReference>
<dbReference type="PANTHER" id="PTHR19375">
    <property type="entry name" value="HEAT SHOCK PROTEIN 70KDA"/>
    <property type="match status" value="1"/>
</dbReference>
<dbReference type="Pfam" id="PF00012">
    <property type="entry name" value="HSP70"/>
    <property type="match status" value="1"/>
</dbReference>
<dbReference type="PRINTS" id="PR00301">
    <property type="entry name" value="HEATSHOCK70"/>
</dbReference>
<dbReference type="SUPFAM" id="SSF53067">
    <property type="entry name" value="Actin-like ATPase domain"/>
    <property type="match status" value="2"/>
</dbReference>
<dbReference type="SUPFAM" id="SSF100934">
    <property type="entry name" value="Heat shock protein 70kD (HSP70), C-terminal subdomain"/>
    <property type="match status" value="1"/>
</dbReference>
<dbReference type="SUPFAM" id="SSF100920">
    <property type="entry name" value="Heat shock protein 70kD (HSP70), peptide-binding domain"/>
    <property type="match status" value="1"/>
</dbReference>
<dbReference type="PROSITE" id="PS00297">
    <property type="entry name" value="HSP70_1"/>
    <property type="match status" value="1"/>
</dbReference>
<dbReference type="PROSITE" id="PS00329">
    <property type="entry name" value="HSP70_2"/>
    <property type="match status" value="1"/>
</dbReference>
<dbReference type="PROSITE" id="PS01036">
    <property type="entry name" value="HSP70_3"/>
    <property type="match status" value="1"/>
</dbReference>
<feature type="chain" id="PRO_1000044896" description="Chaperone protein HscA">
    <location>
        <begin position="1"/>
        <end position="616"/>
    </location>
</feature>
<keyword id="KW-0067">ATP-binding</keyword>
<keyword id="KW-0143">Chaperone</keyword>
<keyword id="KW-0547">Nucleotide-binding</keyword>
<keyword id="KW-1185">Reference proteome</keyword>
<name>HSCA_SHIDS</name>
<organism>
    <name type="scientific">Shigella dysenteriae serotype 1 (strain Sd197)</name>
    <dbReference type="NCBI Taxonomy" id="300267"/>
    <lineage>
        <taxon>Bacteria</taxon>
        <taxon>Pseudomonadati</taxon>
        <taxon>Pseudomonadota</taxon>
        <taxon>Gammaproteobacteria</taxon>
        <taxon>Enterobacterales</taxon>
        <taxon>Enterobacteriaceae</taxon>
        <taxon>Shigella</taxon>
    </lineage>
</organism>